<organism>
    <name type="scientific">Xenopus tropicalis</name>
    <name type="common">Western clawed frog</name>
    <name type="synonym">Silurana tropicalis</name>
    <dbReference type="NCBI Taxonomy" id="8364"/>
    <lineage>
        <taxon>Eukaryota</taxon>
        <taxon>Metazoa</taxon>
        <taxon>Chordata</taxon>
        <taxon>Craniata</taxon>
        <taxon>Vertebrata</taxon>
        <taxon>Euteleostomi</taxon>
        <taxon>Amphibia</taxon>
        <taxon>Batrachia</taxon>
        <taxon>Anura</taxon>
        <taxon>Pipoidea</taxon>
        <taxon>Pipidae</taxon>
        <taxon>Xenopodinae</taxon>
        <taxon>Xenopus</taxon>
        <taxon>Silurana</taxon>
    </lineage>
</organism>
<protein>
    <recommendedName>
        <fullName>Myocardial zonula adherens protein</fullName>
    </recommendedName>
</protein>
<accession>A9UM82</accession>
<name>MYZAP_XENTR</name>
<gene>
    <name type="primary">myzap</name>
</gene>
<evidence type="ECO:0000256" key="1">
    <source>
        <dbReference type="SAM" id="MobiDB-lite"/>
    </source>
</evidence>
<evidence type="ECO:0000305" key="2"/>
<dbReference type="EMBL" id="BC157558">
    <property type="protein sequence ID" value="AAI57559.1"/>
    <property type="molecule type" value="mRNA"/>
</dbReference>
<dbReference type="SMR" id="A9UM82"/>
<dbReference type="FunCoup" id="A9UM82">
    <property type="interactions" value="138"/>
</dbReference>
<dbReference type="STRING" id="8364.ENSXETP00000019860"/>
<dbReference type="PaxDb" id="8364-ENSXETP00000023784"/>
<dbReference type="eggNOG" id="ENOG502QSEE">
    <property type="taxonomic scope" value="Eukaryota"/>
</dbReference>
<dbReference type="InParanoid" id="A9UM82"/>
<dbReference type="Proteomes" id="UP000008143">
    <property type="component" value="Unplaced"/>
</dbReference>
<dbReference type="GO" id="GO:0009898">
    <property type="term" value="C:cytoplasmic side of plasma membrane"/>
    <property type="evidence" value="ECO:0000250"/>
    <property type="project" value="UniProtKB"/>
</dbReference>
<dbReference type="GO" id="GO:0031674">
    <property type="term" value="C:I band"/>
    <property type="evidence" value="ECO:0000250"/>
    <property type="project" value="UniProtKB"/>
</dbReference>
<dbReference type="GO" id="GO:0035556">
    <property type="term" value="P:intracellular signal transduction"/>
    <property type="evidence" value="ECO:0000250"/>
    <property type="project" value="UniProtKB"/>
</dbReference>
<dbReference type="InterPro" id="IPR051375">
    <property type="entry name" value="Tuftelin_GRINL1A/MYZAP/CCD68"/>
</dbReference>
<dbReference type="PANTHER" id="PTHR23171">
    <property type="entry name" value="GDOWN1"/>
    <property type="match status" value="1"/>
</dbReference>
<dbReference type="PANTHER" id="PTHR23171:SF4">
    <property type="entry name" value="TUFTELIN"/>
    <property type="match status" value="1"/>
</dbReference>
<keyword id="KW-1185">Reference proteome</keyword>
<sequence length="485" mass="56355">MMRYGSAATVTTSETASSQKPGGVCRLRLTLPAEASLRPKQEEINRDTSVNADIRSTNERRKKRNGYVLSEKNTAEPPTLHLYTIPKNNTPSAVASSGVVYGVVQRAENNHQNEVVVYEWSTNQLKEEMNYIKDVRGTLEKIREKMFGEYDEMKQKVKQLTQEIKVSSVQKEFLESHSQAQSTALDTFGTINSSLNAASIEMQKTLVDMTLENTNIKDEMKNIKHSYEESLVRLKEKQQLLDSAQNENQLLKVKIESSQEANAEVMREMTRKLYSQYEEKLRQEELKYTAEKDMLVDQTRQYLKAIEDASEKVRLAENKIEERDAKIAELDKLVHRMEQEREHLQDQLIRHEERIQDLDNRMQMQSPDRNQRLEEVATSLRERIKHLDDMVHCQQKKVKHMIEEIELLKKKVHYKDLLIQQLLERIAFLEGENTELQDKVDYLMANKPKTDKETKDIGTSCNLSESQRILTVCVTENEARSIFSI</sequence>
<comment type="similarity">
    <text evidence="2">Belongs to the MYZAP family.</text>
</comment>
<reference key="1">
    <citation type="submission" date="2007-12" db="EMBL/GenBank/DDBJ databases">
        <authorList>
            <consortium name="NIH - Xenopus Gene Collection (XGC) project"/>
        </authorList>
    </citation>
    <scope>NUCLEOTIDE SEQUENCE [LARGE SCALE MRNA]</scope>
    <source>
        <strain>N6</strain>
        <tissue>Oviduct</tissue>
    </source>
</reference>
<proteinExistence type="evidence at transcript level"/>
<feature type="chain" id="PRO_0000376014" description="Myocardial zonula adherens protein">
    <location>
        <begin position="1"/>
        <end position="485"/>
    </location>
</feature>
<feature type="region of interest" description="Disordered" evidence="1">
    <location>
        <begin position="1"/>
        <end position="21"/>
    </location>
</feature>
<feature type="region of interest" description="Disordered" evidence="1">
    <location>
        <begin position="40"/>
        <end position="65"/>
    </location>
</feature>
<feature type="compositionally biased region" description="Low complexity" evidence="1">
    <location>
        <begin position="1"/>
        <end position="18"/>
    </location>
</feature>